<comment type="function">
    <text evidence="1">Required for maturation of urease via the functional incorporation of the urease nickel metallocenter.</text>
</comment>
<comment type="subunit">
    <text evidence="1">UreD, UreF and UreG form a complex that acts as a GTP-hydrolysis-dependent molecular chaperone, activating the urease apoprotein by helping to assemble the nickel containing metallocenter of UreC. The UreE protein probably delivers the nickel.</text>
</comment>
<comment type="subcellular location">
    <subcellularLocation>
        <location evidence="1">Cytoplasm</location>
    </subcellularLocation>
</comment>
<comment type="similarity">
    <text evidence="1">Belongs to the UreF family.</text>
</comment>
<protein>
    <recommendedName>
        <fullName evidence="1">Urease accessory protein UreF</fullName>
    </recommendedName>
</protein>
<evidence type="ECO:0000255" key="1">
    <source>
        <dbReference type="HAMAP-Rule" id="MF_01385"/>
    </source>
</evidence>
<sequence length="227" mass="25132">MSKSRSLVRLLQLASPMLPVGAYSYSQGLEWGIESGEVHDLESAQAWIGDVLQVYQGGFELPVLSRCYRAWQRGDVEALNEWNAFYLAGRDNAEALAESRQMGYSLKRLLLEFEELSGAWATMLEALPNASFPALYAGISQAWEIEEQDALQAYAWSWLENQASAAMKAVPLGQVAGQKILLGVAGKIPVLVEAAIQMQDHEISNFCPALTIAGCRHETQYSRLFRS</sequence>
<name>UREF_METFK</name>
<feature type="chain" id="PRO_0000344133" description="Urease accessory protein UreF">
    <location>
        <begin position="1"/>
        <end position="227"/>
    </location>
</feature>
<organism>
    <name type="scientific">Methylobacillus flagellatus (strain ATCC 51484 / DSM 6875 / VKM B-1610 / KT)</name>
    <dbReference type="NCBI Taxonomy" id="265072"/>
    <lineage>
        <taxon>Bacteria</taxon>
        <taxon>Pseudomonadati</taxon>
        <taxon>Pseudomonadota</taxon>
        <taxon>Betaproteobacteria</taxon>
        <taxon>Nitrosomonadales</taxon>
        <taxon>Methylophilaceae</taxon>
        <taxon>Methylobacillus</taxon>
    </lineage>
</organism>
<reference key="1">
    <citation type="submission" date="2006-03" db="EMBL/GenBank/DDBJ databases">
        <title>Complete sequence of Methylobacillus flagellatus KT.</title>
        <authorList>
            <consortium name="US DOE Joint Genome Institute"/>
            <person name="Copeland A."/>
            <person name="Lucas S."/>
            <person name="Lapidus A."/>
            <person name="Barry K."/>
            <person name="Detter J.C."/>
            <person name="Glavina del Rio T."/>
            <person name="Hammon N."/>
            <person name="Israni S."/>
            <person name="Dalin E."/>
            <person name="Tice H."/>
            <person name="Pitluck S."/>
            <person name="Brettin T."/>
            <person name="Bruce D."/>
            <person name="Han C."/>
            <person name="Tapia R."/>
            <person name="Saunders E."/>
            <person name="Gilna P."/>
            <person name="Schmutz J."/>
            <person name="Larimer F."/>
            <person name="Land M."/>
            <person name="Kyrpides N."/>
            <person name="Anderson I."/>
            <person name="Richardson P."/>
        </authorList>
    </citation>
    <scope>NUCLEOTIDE SEQUENCE [LARGE SCALE GENOMIC DNA]</scope>
    <source>
        <strain>ATCC 51484 / DSM 6875 / VKM B-1610 / KT</strain>
    </source>
</reference>
<gene>
    <name evidence="1" type="primary">ureF</name>
    <name type="ordered locus">Mfla_1765</name>
</gene>
<keyword id="KW-0143">Chaperone</keyword>
<keyword id="KW-0963">Cytoplasm</keyword>
<keyword id="KW-0996">Nickel insertion</keyword>
<keyword id="KW-1185">Reference proteome</keyword>
<accession>Q1H0F4</accession>
<dbReference type="EMBL" id="CP000284">
    <property type="protein sequence ID" value="ABE50033.1"/>
    <property type="molecule type" value="Genomic_DNA"/>
</dbReference>
<dbReference type="RefSeq" id="WP_011479987.1">
    <property type="nucleotide sequence ID" value="NC_007947.1"/>
</dbReference>
<dbReference type="SMR" id="Q1H0F4"/>
<dbReference type="STRING" id="265072.Mfla_1765"/>
<dbReference type="KEGG" id="mfa:Mfla_1765"/>
<dbReference type="eggNOG" id="COG0830">
    <property type="taxonomic scope" value="Bacteria"/>
</dbReference>
<dbReference type="HOGENOM" id="CLU_049215_2_1_4"/>
<dbReference type="OrthoDB" id="9798772at2"/>
<dbReference type="Proteomes" id="UP000002440">
    <property type="component" value="Chromosome"/>
</dbReference>
<dbReference type="GO" id="GO:0005737">
    <property type="term" value="C:cytoplasm"/>
    <property type="evidence" value="ECO:0007669"/>
    <property type="project" value="UniProtKB-SubCell"/>
</dbReference>
<dbReference type="GO" id="GO:0016151">
    <property type="term" value="F:nickel cation binding"/>
    <property type="evidence" value="ECO:0007669"/>
    <property type="project" value="UniProtKB-UniRule"/>
</dbReference>
<dbReference type="Gene3D" id="1.10.4190.10">
    <property type="entry name" value="Urease accessory protein UreF"/>
    <property type="match status" value="1"/>
</dbReference>
<dbReference type="HAMAP" id="MF_01385">
    <property type="entry name" value="UreF"/>
    <property type="match status" value="1"/>
</dbReference>
<dbReference type="InterPro" id="IPR002639">
    <property type="entry name" value="UreF"/>
</dbReference>
<dbReference type="InterPro" id="IPR038277">
    <property type="entry name" value="UreF_sf"/>
</dbReference>
<dbReference type="PANTHER" id="PTHR33620">
    <property type="entry name" value="UREASE ACCESSORY PROTEIN F"/>
    <property type="match status" value="1"/>
</dbReference>
<dbReference type="PANTHER" id="PTHR33620:SF1">
    <property type="entry name" value="UREASE ACCESSORY PROTEIN F"/>
    <property type="match status" value="1"/>
</dbReference>
<dbReference type="Pfam" id="PF01730">
    <property type="entry name" value="UreF"/>
    <property type="match status" value="1"/>
</dbReference>
<dbReference type="PIRSF" id="PIRSF009467">
    <property type="entry name" value="Ureas_acces_UreF"/>
    <property type="match status" value="1"/>
</dbReference>
<proteinExistence type="inferred from homology"/>